<accession>Q8NEC5</accession>
<accession>Q96P76</accession>
<feature type="chain" id="PRO_0000295674" description="Cation channel sperm-associated protein 1">
    <location>
        <begin position="1"/>
        <end position="780"/>
    </location>
</feature>
<feature type="topological domain" description="Cytoplasmic" evidence="1">
    <location>
        <begin position="1"/>
        <end position="447"/>
    </location>
</feature>
<feature type="transmembrane region" description="Helical; Name=Segment S1" evidence="1">
    <location>
        <begin position="448"/>
        <end position="469"/>
    </location>
</feature>
<feature type="topological domain" description="Extracellular" evidence="1">
    <location>
        <begin position="470"/>
        <end position="478"/>
    </location>
</feature>
<feature type="transmembrane region" description="Helical; Name=Segment S2" evidence="1">
    <location>
        <begin position="479"/>
        <end position="500"/>
    </location>
</feature>
<feature type="topological domain" description="Cytoplasmic" evidence="1">
    <location>
        <begin position="501"/>
        <end position="508"/>
    </location>
</feature>
<feature type="transmembrane region" description="Helical; Name=Segment S3" evidence="1">
    <location>
        <begin position="509"/>
        <end position="531"/>
    </location>
</feature>
<feature type="topological domain" description="Extracellular" evidence="1">
    <location>
        <begin position="532"/>
        <end position="540"/>
    </location>
</feature>
<feature type="transmembrane region" description="Helical; Name=Segment S4" evidence="1">
    <location>
        <begin position="541"/>
        <end position="563"/>
    </location>
</feature>
<feature type="topological domain" description="Cytoplasmic" evidence="1">
    <location>
        <begin position="564"/>
        <end position="581"/>
    </location>
</feature>
<feature type="transmembrane region" description="Helical; Name=Segment S5" evidence="1">
    <location>
        <begin position="582"/>
        <end position="604"/>
    </location>
</feature>
<feature type="topological domain" description="Extracellular" evidence="1">
    <location>
        <begin position="605"/>
        <end position="615"/>
    </location>
</feature>
<feature type="intramembrane region" description="Helical; Pore-forming" evidence="1">
    <location>
        <begin position="616"/>
        <end position="628"/>
    </location>
</feature>
<feature type="topological domain" description="Extracellular" evidence="1">
    <location>
        <begin position="629"/>
        <end position="645"/>
    </location>
</feature>
<feature type="transmembrane region" description="Helical; Name=Segment S6" evidence="1">
    <location>
        <begin position="646"/>
        <end position="671"/>
    </location>
</feature>
<feature type="topological domain" description="Cytoplasmic" evidence="1">
    <location>
        <begin position="672"/>
        <end position="780"/>
    </location>
</feature>
<feature type="region of interest" description="Disordered" evidence="2">
    <location>
        <begin position="1"/>
        <end position="37"/>
    </location>
</feature>
<feature type="region of interest" description="Disordered" evidence="2">
    <location>
        <begin position="71"/>
        <end position="306"/>
    </location>
</feature>
<feature type="region of interest" description="Disordered" evidence="2">
    <location>
        <begin position="376"/>
        <end position="412"/>
    </location>
</feature>
<feature type="compositionally biased region" description="Basic and acidic residues" evidence="2">
    <location>
        <begin position="110"/>
        <end position="122"/>
    </location>
</feature>
<feature type="compositionally biased region" description="Basic residues" evidence="2">
    <location>
        <begin position="211"/>
        <end position="241"/>
    </location>
</feature>
<feature type="compositionally biased region" description="Basic and acidic residues" evidence="2">
    <location>
        <begin position="261"/>
        <end position="284"/>
    </location>
</feature>
<feature type="compositionally biased region" description="Basic residues" evidence="2">
    <location>
        <begin position="285"/>
        <end position="299"/>
    </location>
</feature>
<feature type="compositionally biased region" description="Basic and acidic residues" evidence="2">
    <location>
        <begin position="387"/>
        <end position="401"/>
    </location>
</feature>
<feature type="compositionally biased region" description="Basic residues" evidence="2">
    <location>
        <begin position="402"/>
        <end position="412"/>
    </location>
</feature>
<feature type="sequence variant" id="VAR_033304" description="In dbSNP:rs1203998.">
    <original>G</original>
    <variation>S</variation>
    <location>
        <position position="133"/>
    </location>
</feature>
<feature type="sequence variant" id="VAR_033305" description="In dbSNP:rs3814747." evidence="3 5">
    <original>V</original>
    <variation>I</variation>
    <location>
        <position position="652"/>
    </location>
</feature>
<feature type="sequence variant" id="VAR_033306" description="In dbSNP:rs34958219.">
    <original>T</original>
    <variation>P</variation>
    <location>
        <position position="730"/>
    </location>
</feature>
<feature type="sequence conflict" description="In Ref. 2; AAH32950." evidence="13" ref="2">
    <original>G</original>
    <variation>V</variation>
    <location>
        <position position="88"/>
    </location>
</feature>
<evidence type="ECO:0000250" key="1">
    <source>
        <dbReference type="UniProtKB" id="Q91ZR5"/>
    </source>
</evidence>
<evidence type="ECO:0000256" key="2">
    <source>
        <dbReference type="SAM" id="MobiDB-lite"/>
    </source>
</evidence>
<evidence type="ECO:0000269" key="3">
    <source>
    </source>
</evidence>
<evidence type="ECO:0000269" key="4">
    <source>
    </source>
</evidence>
<evidence type="ECO:0000269" key="5">
    <source>
    </source>
</evidence>
<evidence type="ECO:0000269" key="6">
    <source>
    </source>
</evidence>
<evidence type="ECO:0000269" key="7">
    <source>
    </source>
</evidence>
<evidence type="ECO:0000269" key="8">
    <source>
    </source>
</evidence>
<evidence type="ECO:0000269" key="9">
    <source>
    </source>
</evidence>
<evidence type="ECO:0000269" key="10">
    <source>
    </source>
</evidence>
<evidence type="ECO:0000269" key="11">
    <source>
    </source>
</evidence>
<evidence type="ECO:0000269" key="12">
    <source>
    </source>
</evidence>
<evidence type="ECO:0000305" key="13"/>
<evidence type="ECO:0000305" key="14">
    <source>
    </source>
</evidence>
<evidence type="ECO:0000305" key="15">
    <source>
    </source>
</evidence>
<dbReference type="EMBL" id="AF407333">
    <property type="protein sequence ID" value="AAL14105.1"/>
    <property type="molecule type" value="mRNA"/>
</dbReference>
<dbReference type="EMBL" id="AP006287">
    <property type="status" value="NOT_ANNOTATED_CDS"/>
    <property type="molecule type" value="Genomic_DNA"/>
</dbReference>
<dbReference type="EMBL" id="BC032950">
    <property type="protein sequence ID" value="AAH32950.1"/>
    <property type="molecule type" value="mRNA"/>
</dbReference>
<dbReference type="EMBL" id="BC036522">
    <property type="protein sequence ID" value="AAH36522.1"/>
    <property type="molecule type" value="mRNA"/>
</dbReference>
<dbReference type="CCDS" id="CCDS8127.1"/>
<dbReference type="RefSeq" id="NP_444282.3">
    <property type="nucleotide sequence ID" value="NM_053054.3"/>
</dbReference>
<dbReference type="SMR" id="Q8NEC5"/>
<dbReference type="BioGRID" id="125556">
    <property type="interactions" value="122"/>
</dbReference>
<dbReference type="ComplexPortal" id="CPX-9165">
    <property type="entry name" value="CatSpermasome complex"/>
</dbReference>
<dbReference type="CORUM" id="Q8NEC5"/>
<dbReference type="FunCoup" id="Q8NEC5">
    <property type="interactions" value="78"/>
</dbReference>
<dbReference type="IntAct" id="Q8NEC5">
    <property type="interactions" value="117"/>
</dbReference>
<dbReference type="MINT" id="Q8NEC5"/>
<dbReference type="STRING" id="9606.ENSP00000309052"/>
<dbReference type="ChEMBL" id="CHEMBL1628462"/>
<dbReference type="DrugBank" id="DB14083">
    <property type="generic name" value="Bisphenol A diglycidyl ether"/>
</dbReference>
<dbReference type="DrugBank" id="DB11093">
    <property type="generic name" value="Calcium citrate"/>
</dbReference>
<dbReference type="DrugBank" id="DB11348">
    <property type="generic name" value="Calcium Phosphate"/>
</dbReference>
<dbReference type="DrugBank" id="DB14481">
    <property type="generic name" value="Calcium phosphate dihydrate"/>
</dbReference>
<dbReference type="DrugCentral" id="Q8NEC5"/>
<dbReference type="GuidetoPHARMACOLOGY" id="388"/>
<dbReference type="TCDB" id="1.A.1.19.1">
    <property type="family name" value="the voltage-gated ion channel (vic) superfamily"/>
</dbReference>
<dbReference type="iPTMnet" id="Q8NEC5"/>
<dbReference type="PhosphoSitePlus" id="Q8NEC5"/>
<dbReference type="BioMuta" id="CATSPER1"/>
<dbReference type="DMDM" id="296439381"/>
<dbReference type="MassIVE" id="Q8NEC5"/>
<dbReference type="PaxDb" id="9606-ENSP00000309052"/>
<dbReference type="PeptideAtlas" id="Q8NEC5"/>
<dbReference type="ProteomicsDB" id="73148"/>
<dbReference type="Antibodypedia" id="58041">
    <property type="antibodies" value="122 antibodies from 25 providers"/>
</dbReference>
<dbReference type="DNASU" id="117144"/>
<dbReference type="Ensembl" id="ENST00000312106.6">
    <property type="protein sequence ID" value="ENSP00000309052.5"/>
    <property type="gene ID" value="ENSG00000175294.6"/>
</dbReference>
<dbReference type="GeneID" id="117144"/>
<dbReference type="KEGG" id="hsa:117144"/>
<dbReference type="MANE-Select" id="ENST00000312106.6">
    <property type="protein sequence ID" value="ENSP00000309052.5"/>
    <property type="RefSeq nucleotide sequence ID" value="NM_053054.4"/>
    <property type="RefSeq protein sequence ID" value="NP_444282.3"/>
</dbReference>
<dbReference type="UCSC" id="uc001ogt.3">
    <property type="organism name" value="human"/>
</dbReference>
<dbReference type="AGR" id="HGNC:17116"/>
<dbReference type="CTD" id="117144"/>
<dbReference type="DisGeNET" id="117144"/>
<dbReference type="GeneCards" id="CATSPER1"/>
<dbReference type="HGNC" id="HGNC:17116">
    <property type="gene designation" value="CATSPER1"/>
</dbReference>
<dbReference type="HPA" id="ENSG00000175294">
    <property type="expression patterns" value="Tissue enriched (testis)"/>
</dbReference>
<dbReference type="MalaCards" id="CATSPER1"/>
<dbReference type="MIM" id="606389">
    <property type="type" value="gene"/>
</dbReference>
<dbReference type="MIM" id="612997">
    <property type="type" value="phenotype"/>
</dbReference>
<dbReference type="neXtProt" id="NX_Q8NEC5"/>
<dbReference type="OpenTargets" id="ENSG00000175294"/>
<dbReference type="Orphanet" id="276234">
    <property type="disease" value="Non-syndromic male infertility due to sperm motility disorder"/>
</dbReference>
<dbReference type="PharmGKB" id="PA38438"/>
<dbReference type="VEuPathDB" id="HostDB:ENSG00000175294"/>
<dbReference type="eggNOG" id="KOG2302">
    <property type="taxonomic scope" value="Eukaryota"/>
</dbReference>
<dbReference type="GeneTree" id="ENSGT00940000162437"/>
<dbReference type="HOGENOM" id="CLU_016037_0_0_1"/>
<dbReference type="InParanoid" id="Q8NEC5"/>
<dbReference type="OMA" id="ESQHHQV"/>
<dbReference type="OrthoDB" id="431720at2759"/>
<dbReference type="PAN-GO" id="Q8NEC5">
    <property type="GO annotations" value="6 GO annotations based on evolutionary models"/>
</dbReference>
<dbReference type="PhylomeDB" id="Q8NEC5"/>
<dbReference type="TreeFam" id="TF329330"/>
<dbReference type="PathwayCommons" id="Q8NEC5"/>
<dbReference type="Reactome" id="R-HSA-1300642">
    <property type="pathway name" value="Sperm Motility And Taxes"/>
</dbReference>
<dbReference type="SignaLink" id="Q8NEC5"/>
<dbReference type="BioGRID-ORCS" id="117144">
    <property type="hits" value="26 hits in 1147 CRISPR screens"/>
</dbReference>
<dbReference type="GeneWiki" id="CatSper1"/>
<dbReference type="GenomeRNAi" id="117144"/>
<dbReference type="Pharos" id="Q8NEC5">
    <property type="development level" value="Tchem"/>
</dbReference>
<dbReference type="PRO" id="PR:Q8NEC5"/>
<dbReference type="Proteomes" id="UP000005640">
    <property type="component" value="Chromosome 11"/>
</dbReference>
<dbReference type="RNAct" id="Q8NEC5">
    <property type="molecule type" value="protein"/>
</dbReference>
<dbReference type="Bgee" id="ENSG00000175294">
    <property type="expression patterns" value="Expressed in male germ line stem cell (sensu Vertebrata) in testis and 99 other cell types or tissues"/>
</dbReference>
<dbReference type="GO" id="GO:0036128">
    <property type="term" value="C:CatSper complex"/>
    <property type="evidence" value="ECO:0000250"/>
    <property type="project" value="UniProtKB"/>
</dbReference>
<dbReference type="GO" id="GO:0005886">
    <property type="term" value="C:plasma membrane"/>
    <property type="evidence" value="ECO:0000304"/>
    <property type="project" value="Reactome"/>
</dbReference>
<dbReference type="GO" id="GO:0036126">
    <property type="term" value="C:sperm flagellum"/>
    <property type="evidence" value="ECO:0000314"/>
    <property type="project" value="UniProtKB"/>
</dbReference>
<dbReference type="GO" id="GO:0097228">
    <property type="term" value="C:sperm principal piece"/>
    <property type="evidence" value="ECO:0000250"/>
    <property type="project" value="UniProtKB"/>
</dbReference>
<dbReference type="GO" id="GO:0005227">
    <property type="term" value="F:calcium-activated cation channel activity"/>
    <property type="evidence" value="ECO:0007669"/>
    <property type="project" value="InterPro"/>
</dbReference>
<dbReference type="GO" id="GO:0005245">
    <property type="term" value="F:voltage-gated calcium channel activity"/>
    <property type="evidence" value="ECO:0000314"/>
    <property type="project" value="UniProtKB"/>
</dbReference>
<dbReference type="GO" id="GO:0006816">
    <property type="term" value="P:calcium ion transport"/>
    <property type="evidence" value="ECO:0000314"/>
    <property type="project" value="UniProtKB"/>
</dbReference>
<dbReference type="GO" id="GO:0030154">
    <property type="term" value="P:cell differentiation"/>
    <property type="evidence" value="ECO:0007669"/>
    <property type="project" value="UniProtKB-KW"/>
</dbReference>
<dbReference type="GO" id="GO:0030317">
    <property type="term" value="P:flagellated sperm motility"/>
    <property type="evidence" value="ECO:0000318"/>
    <property type="project" value="GO_Central"/>
</dbReference>
<dbReference type="GO" id="GO:0060296">
    <property type="term" value="P:regulation of cilium beat frequency involved in ciliary motility"/>
    <property type="evidence" value="ECO:0000318"/>
    <property type="project" value="GO_Central"/>
</dbReference>
<dbReference type="GO" id="GO:0007283">
    <property type="term" value="P:spermatogenesis"/>
    <property type="evidence" value="ECO:0000318"/>
    <property type="project" value="GO_Central"/>
</dbReference>
<dbReference type="FunFam" id="1.20.120.350:FF:000078">
    <property type="entry name" value="Cation channel sperm associated 1"/>
    <property type="match status" value="1"/>
</dbReference>
<dbReference type="FunFam" id="1.10.287.70:FF:000140">
    <property type="entry name" value="cation channel sperm-associated protein 1"/>
    <property type="match status" value="1"/>
</dbReference>
<dbReference type="Gene3D" id="1.10.287.70">
    <property type="match status" value="1"/>
</dbReference>
<dbReference type="Gene3D" id="1.20.120.350">
    <property type="entry name" value="Voltage-gated potassium channels. Chain C"/>
    <property type="match status" value="1"/>
</dbReference>
<dbReference type="InterPro" id="IPR028746">
    <property type="entry name" value="CatSper1"/>
</dbReference>
<dbReference type="InterPro" id="IPR005821">
    <property type="entry name" value="Ion_trans_dom"/>
</dbReference>
<dbReference type="InterPro" id="IPR027359">
    <property type="entry name" value="Volt_channel_dom_sf"/>
</dbReference>
<dbReference type="PANTHER" id="PTHR47193">
    <property type="entry name" value="CATION CHANNEL SPERM-ASSOCIATED PROTEIN 1"/>
    <property type="match status" value="1"/>
</dbReference>
<dbReference type="PANTHER" id="PTHR47193:SF1">
    <property type="entry name" value="CATION CHANNEL SPERM-ASSOCIATED PROTEIN 1"/>
    <property type="match status" value="1"/>
</dbReference>
<dbReference type="Pfam" id="PF00520">
    <property type="entry name" value="Ion_trans"/>
    <property type="match status" value="1"/>
</dbReference>
<dbReference type="SUPFAM" id="SSF81324">
    <property type="entry name" value="Voltage-gated potassium channels"/>
    <property type="match status" value="1"/>
</dbReference>
<sequence>MDQNSVPEKAQNEADTNNADRFFRSHSSPPHHRPGHSRALHHYELHHHGVPHQRGESHHPPEFQDFHDQALSSHVHQSHHHSEARNHGRAHGPTGFGLAPSQGAVPSHRSYGEDYHDELQRDGRRHHDGSQYGGFHQQSDSHYHRGSHHGRPQYLGENLSHYSSGVPHHGEASHHGGSYLPHGPNPYSESFHHSEASHLSGLQHDESQHHQVPHRGWPHHHQVHHHGRSRHHEAHQHGKSPHHGETISPHSSVGSYQRGISDYHSEYHQGDHHPSEYHHGDHPHHTQHHYHQTHRHRDYHQHQDHHGAYHSSYLHGDYVQSTSQLSIPHTSRSLIHDAPGPAASRTGVFPYHVAHPRGSAHSMTRSSSTIRSRVTQMSKKVHTQDISTKHSEDWGKEEGQFQKRKTGRLQRTRKKGHSTNLFQWLWEKLTFLIQGFREMIRNLTQSLAFETFIFFVVCLNTVMLVAQTFAEVEIRGEWYFMALDSIFFCIYVVEALLKIIALGLSYFFDFWNNLDFFIMAMAVLDFLLMQTHSFAIYHQSLFRILKVFKSLRALRAIRVLRRLSFLTSVQEVTGTLGQSLPSIAAILILMFTCLFLFSAVLRALFRKSDPKRFQNIFTTIFTLFTLLTLDDWSLIYMDSRAQGAWYIIPILVIYIIIQYFIFLNLVITVLVDSFQTALFKGLEKAKQERAARIQEKLLEDSLTELRAAEPKEVASEGTMLKRLIEKKFGTMTEKQQELLFHYLQLVASVEQEQQKFRSQAAVIDEIVDTTFEAGEEDFRN</sequence>
<keyword id="KW-0106">Calcium</keyword>
<keyword id="KW-0107">Calcium channel</keyword>
<keyword id="KW-0109">Calcium transport</keyword>
<keyword id="KW-1003">Cell membrane</keyword>
<keyword id="KW-0966">Cell projection</keyword>
<keyword id="KW-0969">Cilium</keyword>
<keyword id="KW-0217">Developmental protein</keyword>
<keyword id="KW-0221">Differentiation</keyword>
<keyword id="KW-0282">Flagellum</keyword>
<keyword id="KW-0407">Ion channel</keyword>
<keyword id="KW-0406">Ion transport</keyword>
<keyword id="KW-0472">Membrane</keyword>
<keyword id="KW-1267">Proteomics identification</keyword>
<keyword id="KW-1185">Reference proteome</keyword>
<keyword id="KW-0744">Spermatogenesis</keyword>
<keyword id="KW-0812">Transmembrane</keyword>
<keyword id="KW-1133">Transmembrane helix</keyword>
<keyword id="KW-0813">Transport</keyword>
<keyword id="KW-0851">Voltage-gated channel</keyword>
<protein>
    <recommendedName>
        <fullName>Cation channel sperm-associated protein 1</fullName>
        <shortName>CatSper1</shortName>
        <shortName>hCatSper</shortName>
    </recommendedName>
</protein>
<comment type="function">
    <text evidence="10 11">Pore-forming subunit of the CatSper complex, a sperm-specific voltage-gated calcium channel that plays a central role in calcium-dependent physiological responses essential for successful fertilization, such as sperm hyperactivation, acrosome reaction and chemotaxis towards the oocyte.</text>
</comment>
<comment type="catalytic activity">
    <reaction evidence="14 15">
        <text>Ca(2+)(in) = Ca(2+)(out)</text>
        <dbReference type="Rhea" id="RHEA:29671"/>
        <dbReference type="ChEBI" id="CHEBI:29108"/>
    </reaction>
</comment>
<comment type="activity regulation">
    <text evidence="10 11 12">The CatSper calcium channel is indirectly activated by extracellular progesterone and prostaglandins following the sequence: progesterone &gt; PGF1-alpha = PGE1 &gt; PGA1 &gt; PGE2 &gt;&gt; PGD2 (PubMed:21412338, PubMed:21412339, PubMed:26989199). The CatSper calcium channel is directly inhibited by endocannabinoid 2-arachidonoylglycerol (2AG) (PubMed:26989199). Indirect activation by progesterone takes place via the following mechanism: progesterone binds and activates the acylglycerol lipase ABHD2, which in turn mediates hydrolysis of 2AG inhibitor, relieving inhibition of the CatSper channel (PubMed:26989199). The primary effect of progesterone activation is to shift voltage dependence towards more physiological, negative membrane potentials; it is not mediated by metabotropic receptors and second messengers (PubMed:21412338, PubMed:21412339). Sperm capacitation enhances the effect of progesterone by providing additional negative shift. Also activated by the elevation of intracellular pH (PubMed:21412338, PubMed:21412339).</text>
</comment>
<comment type="subunit">
    <text evidence="1 7">Component of the CatSper complex or CatSpermasome composed of the core pore-forming members CATSPER1, CATSPER2, CATSPER3 and CATSPER4 as well as auxiliary members CATSPERB, CATSPERG, CATSPERD, CATSPERE, CATSPERZ, C2CD6/CATSPERT, TMEM249, TMEM262 and EFCAB9 (By similarity). HSPA1 may be an additional auxiliary complex member (By similarity). The core complex members CATSPER1, CATSPER2, CATSPER3 and CATSPER4 form a heterotetrameric channel (By similarity). The auxiliary CATSPERB, CATSPERG, CATSPERD and CATSPERE subunits form a pavilion-like structure over the pore which stabilizes the complex through interactions with CATSPER4, CATSPER3, CATSPER1 and CATSPER2 respectively (By similarity). TMEM262/CATSPERH interacts with CATSPERB, further stabilizing the complex. C2CD6/CATSPERT interacts at least with CATSPERD and is required for targeting the CatSper complex in the flagellar membrane (By similarity). Interacts with Ca(v)3.3/CACNA1I, leading to suppression of T-type calcium channel activity (PubMed:16740636).</text>
</comment>
<comment type="interaction">
    <interactant intactId="EBI-744545">
        <id>Q8NEC5</id>
    </interactant>
    <interactant intactId="EBI-11961672">
        <id>O94929-2</id>
        <label>ABLIM3</label>
    </interactant>
    <organismsDiffer>false</organismsDiffer>
    <experiments>3</experiments>
</comment>
<comment type="interaction">
    <interactant intactId="EBI-744545">
        <id>Q8NEC5</id>
    </interactant>
    <interactant intactId="EBI-10173507">
        <id>Q6UY14-3</id>
        <label>ADAMTSL4</label>
    </interactant>
    <organismsDiffer>false</organismsDiffer>
    <experiments>3</experiments>
</comment>
<comment type="interaction">
    <interactant intactId="EBI-744545">
        <id>Q8NEC5</id>
    </interactant>
    <interactant intactId="EBI-712648">
        <id>O95994</id>
        <label>AGR2</label>
    </interactant>
    <organismsDiffer>false</organismsDiffer>
    <experiments>6</experiments>
</comment>
<comment type="interaction">
    <interactant intactId="EBI-744545">
        <id>Q8NEC5</id>
    </interactant>
    <interactant intactId="EBI-3925742">
        <id>Q8TD06</id>
        <label>AGR3</label>
    </interactant>
    <organismsDiffer>false</organismsDiffer>
    <experiments>3</experiments>
</comment>
<comment type="interaction">
    <interactant intactId="EBI-744545">
        <id>Q8NEC5</id>
    </interactant>
    <interactant intactId="EBI-949782">
        <id>Q96IF1</id>
        <label>AJUBA</label>
    </interactant>
    <organismsDiffer>false</organismsDiffer>
    <experiments>3</experiments>
</comment>
<comment type="interaction">
    <interactant intactId="EBI-744545">
        <id>Q8NEC5</id>
    </interactant>
    <interactant intactId="EBI-357530">
        <id>Q9ULX6</id>
        <label>AKAP8L</label>
    </interactant>
    <organismsDiffer>false</organismsDiffer>
    <experiments>3</experiments>
</comment>
<comment type="interaction">
    <interactant intactId="EBI-744545">
        <id>Q8NEC5</id>
    </interactant>
    <interactant intactId="EBI-1171525">
        <id>P02652</id>
        <label>APOA2</label>
    </interactant>
    <organismsDiffer>false</organismsDiffer>
    <experiments>7</experiments>
</comment>
<comment type="interaction">
    <interactant intactId="EBI-744545">
        <id>Q8NEC5</id>
    </interactant>
    <interactant intactId="EBI-948603">
        <id>Q03989</id>
        <label>ARID5A</label>
    </interactant>
    <organismsDiffer>false</organismsDiffer>
    <experiments>3</experiments>
</comment>
<comment type="interaction">
    <interactant intactId="EBI-744545">
        <id>Q8NEC5</id>
    </interactant>
    <interactant intactId="EBI-1220829">
        <id>Q9P0X4</id>
        <label>CACNA1I</label>
    </interactant>
    <organismsDiffer>false</organismsDiffer>
    <experiments>5</experiments>
</comment>
<comment type="interaction">
    <interactant intactId="EBI-744545">
        <id>Q8NEC5</id>
    </interactant>
    <interactant intactId="EBI-3866279">
        <id>Q9BWT7</id>
        <label>CARD10</label>
    </interactant>
    <organismsDiffer>false</organismsDiffer>
    <experiments>3</experiments>
</comment>
<comment type="interaction">
    <interactant intactId="EBI-744545">
        <id>Q8NEC5</id>
    </interactant>
    <interactant intactId="EBI-2802782">
        <id>Q6NVV7</id>
        <label>CDPF1</label>
    </interactant>
    <organismsDiffer>false</organismsDiffer>
    <experiments>3</experiments>
</comment>
<comment type="interaction">
    <interactant intactId="EBI-744545">
        <id>Q8NEC5</id>
    </interactant>
    <interactant intactId="EBI-718615">
        <id>Q9H5F2</id>
        <label>CFAP68</label>
    </interactant>
    <organismsDiffer>false</organismsDiffer>
    <experiments>5</experiments>
</comment>
<comment type="interaction">
    <interactant intactId="EBI-744545">
        <id>Q8NEC5</id>
    </interactant>
    <interactant intactId="EBI-741528">
        <id>Q9UKJ5</id>
        <label>CHIC2</label>
    </interactant>
    <organismsDiffer>false</organismsDiffer>
    <experiments>4</experiments>
</comment>
<comment type="interaction">
    <interactant intactId="EBI-744545">
        <id>Q8NEC5</id>
    </interactant>
    <interactant intactId="EBI-947551">
        <id>Q9H2X0</id>
        <label>CHRD</label>
    </interactant>
    <organismsDiffer>false</organismsDiffer>
    <experiments>3</experiments>
</comment>
<comment type="interaction">
    <interactant intactId="EBI-744545">
        <id>Q8NEC5</id>
    </interactant>
    <interactant intactId="EBI-11523759">
        <id>Q8N684-3</id>
        <label>CPSF7</label>
    </interactant>
    <organismsDiffer>false</organismsDiffer>
    <experiments>3</experiments>
</comment>
<comment type="interaction">
    <interactant intactId="EBI-744545">
        <id>Q8NEC5</id>
    </interactant>
    <interactant intactId="EBI-10171902">
        <id>P56545-3</id>
        <label>CTBP2</label>
    </interactant>
    <organismsDiffer>false</organismsDiffer>
    <experiments>3</experiments>
</comment>
<comment type="interaction">
    <interactant intactId="EBI-744545">
        <id>Q8NEC5</id>
    </interactant>
    <interactant intactId="EBI-3867333">
        <id>A8MQ03</id>
        <label>CYSRT1</label>
    </interactant>
    <organismsDiffer>false</organismsDiffer>
    <experiments>3</experiments>
</comment>
<comment type="interaction">
    <interactant intactId="EBI-744545">
        <id>Q8NEC5</id>
    </interactant>
    <interactant intactId="EBI-489887">
        <id>P50402</id>
        <label>EMD</label>
    </interactant>
    <organismsDiffer>false</organismsDiffer>
    <experiments>9</experiments>
</comment>
<comment type="interaction">
    <interactant intactId="EBI-744545">
        <id>Q8NEC5</id>
    </interactant>
    <interactant intactId="EBI-12807776">
        <id>O00167-2</id>
        <label>EYA2</label>
    </interactant>
    <organismsDiffer>false</organismsDiffer>
    <experiments>3</experiments>
</comment>
<comment type="interaction">
    <interactant intactId="EBI-744545">
        <id>Q8NEC5</id>
    </interactant>
    <interactant intactId="EBI-750641">
        <id>Q5TD97</id>
        <label>FHL5</label>
    </interactant>
    <organismsDiffer>false</organismsDiffer>
    <experiments>3</experiments>
</comment>
<comment type="interaction">
    <interactant intactId="EBI-744545">
        <id>Q8NEC5</id>
    </interactant>
    <interactant intactId="EBI-725515">
        <id>O43559</id>
        <label>FRS3</label>
    </interactant>
    <organismsDiffer>false</organismsDiffer>
    <experiments>3</experiments>
</comment>
<comment type="interaction">
    <interactant intactId="EBI-744545">
        <id>Q8NEC5</id>
    </interactant>
    <interactant intactId="EBI-1571188">
        <id>P19883</id>
        <label>FST</label>
    </interactant>
    <organismsDiffer>false</organismsDiffer>
    <experiments>3</experiments>
</comment>
<comment type="interaction">
    <interactant intactId="EBI-744545">
        <id>Q8NEC5</id>
    </interactant>
    <interactant intactId="EBI-308084">
        <id>P08151</id>
        <label>GLI1</label>
    </interactant>
    <organismsDiffer>false</organismsDiffer>
    <experiments>3</experiments>
</comment>
<comment type="interaction">
    <interactant intactId="EBI-744545">
        <id>Q8NEC5</id>
    </interactant>
    <interactant intactId="EBI-351590">
        <id>P31943</id>
        <label>HNRNPH1</label>
    </interactant>
    <organismsDiffer>false</organismsDiffer>
    <experiments>3</experiments>
</comment>
<comment type="interaction">
    <interactant intactId="EBI-744545">
        <id>Q8NEC5</id>
    </interactant>
    <interactant intactId="EBI-740785">
        <id>P49639</id>
        <label>HOXA1</label>
    </interactant>
    <organismsDiffer>false</organismsDiffer>
    <experiments>3</experiments>
</comment>
<comment type="interaction">
    <interactant intactId="EBI-744545">
        <id>Q8NEC5</id>
    </interactant>
    <interactant intactId="EBI-747204">
        <id>Q9UKT9</id>
        <label>IKZF3</label>
    </interactant>
    <organismsDiffer>false</organismsDiffer>
    <experiments>3</experiments>
</comment>
<comment type="interaction">
    <interactant intactId="EBI-744545">
        <id>Q8NEC5</id>
    </interactant>
    <interactant intactId="EBI-742808">
        <id>Q5VWX1</id>
        <label>KHDRBS2</label>
    </interactant>
    <organismsDiffer>false</organismsDiffer>
    <experiments>6</experiments>
</comment>
<comment type="interaction">
    <interactant intactId="EBI-744545">
        <id>Q8NEC5</id>
    </interactant>
    <interactant intactId="EBI-10981970">
        <id>Q5T749</id>
        <label>KPRP</label>
    </interactant>
    <organismsDiffer>false</organismsDiffer>
    <experiments>5</experiments>
</comment>
<comment type="interaction">
    <interactant intactId="EBI-744545">
        <id>Q8NEC5</id>
    </interactant>
    <interactant intactId="EBI-948001">
        <id>Q15323</id>
        <label>KRT31</label>
    </interactant>
    <organismsDiffer>false</organismsDiffer>
    <experiments>3</experiments>
</comment>
<comment type="interaction">
    <interactant intactId="EBI-744545">
        <id>Q8NEC5</id>
    </interactant>
    <interactant intactId="EBI-11959885">
        <id>Q07627</id>
        <label>KRTAP1-1</label>
    </interactant>
    <organismsDiffer>false</organismsDiffer>
    <experiments>3</experiments>
</comment>
<comment type="interaction">
    <interactant intactId="EBI-744545">
        <id>Q8NEC5</id>
    </interactant>
    <interactant intactId="EBI-11749135">
        <id>Q8IUG1</id>
        <label>KRTAP1-3</label>
    </interactant>
    <organismsDiffer>false</organismsDiffer>
    <experiments>3</experiments>
</comment>
<comment type="interaction">
    <interactant intactId="EBI-744545">
        <id>Q8NEC5</id>
    </interactant>
    <interactant intactId="EBI-11741292">
        <id>Q9BYS1</id>
        <label>KRTAP1-5</label>
    </interactant>
    <organismsDiffer>false</organismsDiffer>
    <experiments>3</experiments>
</comment>
<comment type="interaction">
    <interactant intactId="EBI-744545">
        <id>Q8NEC5</id>
    </interactant>
    <interactant intactId="EBI-11955579">
        <id>P60014</id>
        <label>KRTAP10-10</label>
    </interactant>
    <organismsDiffer>false</organismsDiffer>
    <experiments>3</experiments>
</comment>
<comment type="interaction">
    <interactant intactId="EBI-744545">
        <id>Q8NEC5</id>
    </interactant>
    <interactant intactId="EBI-10217483">
        <id>P60412</id>
        <label>KRTAP10-11</label>
    </interactant>
    <organismsDiffer>false</organismsDiffer>
    <experiments>6</experiments>
</comment>
<comment type="interaction">
    <interactant intactId="EBI-744545">
        <id>Q8NEC5</id>
    </interactant>
    <interactant intactId="EBI-10178153">
        <id>P60372</id>
        <label>KRTAP10-4</label>
    </interactant>
    <organismsDiffer>false</organismsDiffer>
    <experiments>3</experiments>
</comment>
<comment type="interaction">
    <interactant intactId="EBI-744545">
        <id>Q8NEC5</id>
    </interactant>
    <interactant intactId="EBI-10172150">
        <id>P60370</id>
        <label>KRTAP10-5</label>
    </interactant>
    <organismsDiffer>false</organismsDiffer>
    <experiments>3</experiments>
</comment>
<comment type="interaction">
    <interactant intactId="EBI-744545">
        <id>Q8NEC5</id>
    </interactant>
    <interactant intactId="EBI-10171774">
        <id>P60410</id>
        <label>KRTAP10-8</label>
    </interactant>
    <organismsDiffer>false</organismsDiffer>
    <experiments>8</experiments>
</comment>
<comment type="interaction">
    <interactant intactId="EBI-744545">
        <id>Q8NEC5</id>
    </interactant>
    <interactant intactId="EBI-10172052">
        <id>P60411</id>
        <label>KRTAP10-9</label>
    </interactant>
    <organismsDiffer>false</organismsDiffer>
    <experiments>11</experiments>
</comment>
<comment type="interaction">
    <interactant intactId="EBI-744545">
        <id>Q8NEC5</id>
    </interactant>
    <interactant intactId="EBI-10210845">
        <id>P59990</id>
        <label>KRTAP12-1</label>
    </interactant>
    <organismsDiffer>false</organismsDiffer>
    <experiments>3</experiments>
</comment>
<comment type="interaction">
    <interactant intactId="EBI-744545">
        <id>Q8NEC5</id>
    </interactant>
    <interactant intactId="EBI-10176379">
        <id>P59991</id>
        <label>KRTAP12-2</label>
    </interactant>
    <organismsDiffer>false</organismsDiffer>
    <experiments>3</experiments>
</comment>
<comment type="interaction">
    <interactant intactId="EBI-744545">
        <id>Q8NEC5</id>
    </interactant>
    <interactant intactId="EBI-11953334">
        <id>P60328</id>
        <label>KRTAP12-3</label>
    </interactant>
    <organismsDiffer>false</organismsDiffer>
    <experiments>3</experiments>
</comment>
<comment type="interaction">
    <interactant intactId="EBI-744545">
        <id>Q8NEC5</id>
    </interactant>
    <interactant intactId="EBI-11988175">
        <id>Q9BYP8</id>
        <label>KRTAP17-1</label>
    </interactant>
    <organismsDiffer>false</organismsDiffer>
    <experiments>3</experiments>
</comment>
<comment type="interaction">
    <interactant intactId="EBI-744545">
        <id>Q8NEC5</id>
    </interactant>
    <interactant intactId="EBI-1048945">
        <id>Q3LI72</id>
        <label>KRTAP19-5</label>
    </interactant>
    <organismsDiffer>false</organismsDiffer>
    <experiments>3</experiments>
</comment>
<comment type="interaction">
    <interactant intactId="EBI-744545">
        <id>Q8NEC5</id>
    </interactant>
    <interactant intactId="EBI-12805508">
        <id>Q3LI70</id>
        <label>KRTAP19-6</label>
    </interactant>
    <organismsDiffer>false</organismsDiffer>
    <experiments>3</experiments>
</comment>
<comment type="interaction">
    <interactant intactId="EBI-744545">
        <id>Q8NEC5</id>
    </interactant>
    <interactant intactId="EBI-10241353">
        <id>Q3SYF9</id>
        <label>KRTAP19-7</label>
    </interactant>
    <organismsDiffer>false</organismsDiffer>
    <experiments>3</experiments>
</comment>
<comment type="interaction">
    <interactant intactId="EBI-744545">
        <id>Q8NEC5</id>
    </interactant>
    <interactant intactId="EBI-14065470">
        <id>Q9BYR9</id>
        <label>KRTAP2-4</label>
    </interactant>
    <organismsDiffer>false</organismsDiffer>
    <experiments>3</experiments>
</comment>
<comment type="interaction">
    <interactant intactId="EBI-744545">
        <id>Q8NEC5</id>
    </interactant>
    <interactant intactId="EBI-751260">
        <id>Q9BYR7</id>
        <label>KRTAP3-2</label>
    </interactant>
    <organismsDiffer>false</organismsDiffer>
    <experiments>3</experiments>
</comment>
<comment type="interaction">
    <interactant intactId="EBI-744545">
        <id>Q8NEC5</id>
    </interactant>
    <interactant intactId="EBI-34579671">
        <id>Q9BYQ7</id>
        <label>KRTAP4-1</label>
    </interactant>
    <organismsDiffer>false</organismsDiffer>
    <experiments>3</experiments>
</comment>
<comment type="interaction">
    <interactant intactId="EBI-744545">
        <id>Q8NEC5</id>
    </interactant>
    <interactant intactId="EBI-10302392">
        <id>Q9BYQ6</id>
        <label>KRTAP4-11</label>
    </interactant>
    <organismsDiffer>false</organismsDiffer>
    <experiments>6</experiments>
</comment>
<comment type="interaction">
    <interactant intactId="EBI-744545">
        <id>Q8NEC5</id>
    </interactant>
    <interactant intactId="EBI-739863">
        <id>Q9BQ66</id>
        <label>KRTAP4-12</label>
    </interactant>
    <organismsDiffer>false</organismsDiffer>
    <experiments>9</experiments>
</comment>
<comment type="interaction">
    <interactant intactId="EBI-744545">
        <id>Q8NEC5</id>
    </interactant>
    <interactant intactId="EBI-10172511">
        <id>Q9BYR5</id>
        <label>KRTAP4-2</label>
    </interactant>
    <organismsDiffer>false</organismsDiffer>
    <experiments>3</experiments>
</comment>
<comment type="interaction">
    <interactant intactId="EBI-744545">
        <id>Q8NEC5</id>
    </interactant>
    <interactant intactId="EBI-11958132">
        <id>Q9BYR3</id>
        <label>KRTAP4-4</label>
    </interactant>
    <organismsDiffer>false</organismsDiffer>
    <experiments>3</experiments>
</comment>
<comment type="interaction">
    <interactant intactId="EBI-744545">
        <id>Q8NEC5</id>
    </interactant>
    <interactant intactId="EBI-10302547">
        <id>Q9BYR0</id>
        <label>KRTAP4-7</label>
    </interactant>
    <organismsDiffer>false</organismsDiffer>
    <experiments>3</experiments>
</comment>
<comment type="interaction">
    <interactant intactId="EBI-744545">
        <id>Q8NEC5</id>
    </interactant>
    <interactant intactId="EBI-11993296">
        <id>Q6L8G4</id>
        <label>KRTAP5-11</label>
    </interactant>
    <organismsDiffer>false</organismsDiffer>
    <experiments>3</experiments>
</comment>
<comment type="interaction">
    <interactant intactId="EBI-744545">
        <id>Q8NEC5</id>
    </interactant>
    <interactant intactId="EBI-11974251">
        <id>Q6L8H2</id>
        <label>KRTAP5-3</label>
    </interactant>
    <organismsDiffer>false</organismsDiffer>
    <experiments>6</experiments>
</comment>
<comment type="interaction">
    <interactant intactId="EBI-744545">
        <id>Q8NEC5</id>
    </interactant>
    <interactant intactId="EBI-11963072">
        <id>Q6L8H1</id>
        <label>KRTAP5-4</label>
    </interactant>
    <organismsDiffer>false</organismsDiffer>
    <experiments>3</experiments>
</comment>
<comment type="interaction">
    <interactant intactId="EBI-744545">
        <id>Q8NEC5</id>
    </interactant>
    <interactant intactId="EBI-10250562">
        <id>Q6L8G9</id>
        <label>KRTAP5-6</label>
    </interactant>
    <organismsDiffer>false</organismsDiffer>
    <experiments>6</experiments>
</comment>
<comment type="interaction">
    <interactant intactId="EBI-744545">
        <id>Q8NEC5</id>
    </interactant>
    <interactant intactId="EBI-3958099">
        <id>P26371</id>
        <label>KRTAP5-9</label>
    </interactant>
    <organismsDiffer>false</organismsDiffer>
    <experiments>6</experiments>
</comment>
<comment type="interaction">
    <interactant intactId="EBI-744545">
        <id>Q8NEC5</id>
    </interactant>
    <interactant intactId="EBI-12111050">
        <id>Q3LI64</id>
        <label>KRTAP6-1</label>
    </interactant>
    <organismsDiffer>false</organismsDiffer>
    <experiments>3</experiments>
</comment>
<comment type="interaction">
    <interactant intactId="EBI-744545">
        <id>Q8NEC5</id>
    </interactant>
    <interactant intactId="EBI-11962084">
        <id>Q3LI66</id>
        <label>KRTAP6-2</label>
    </interactant>
    <organismsDiffer>false</organismsDiffer>
    <experiments>3</experiments>
</comment>
<comment type="interaction">
    <interactant intactId="EBI-744545">
        <id>Q8NEC5</id>
    </interactant>
    <interactant intactId="EBI-1044640">
        <id>Q9BYQ4</id>
        <label>KRTAP9-2</label>
    </interactant>
    <organismsDiffer>false</organismsDiffer>
    <experiments>8</experiments>
</comment>
<comment type="interaction">
    <interactant intactId="EBI-744545">
        <id>Q8NEC5</id>
    </interactant>
    <interactant intactId="EBI-1043191">
        <id>Q9BYQ3</id>
        <label>KRTAP9-3</label>
    </interactant>
    <organismsDiffer>false</organismsDiffer>
    <experiments>3</experiments>
</comment>
<comment type="interaction">
    <interactant intactId="EBI-744545">
        <id>Q8NEC5</id>
    </interactant>
    <interactant intactId="EBI-10185730">
        <id>Q9BYQ2</id>
        <label>KRTAP9-4</label>
    </interactant>
    <organismsDiffer>false</organismsDiffer>
    <experiments>3</experiments>
</comment>
<comment type="interaction">
    <interactant intactId="EBI-744545">
        <id>Q8NEC5</id>
    </interactant>
    <interactant intactId="EBI-11958364">
        <id>Q9BYQ0</id>
        <label>KRTAP9-8</label>
    </interactant>
    <organismsDiffer>false</organismsDiffer>
    <experiments>3</experiments>
</comment>
<comment type="interaction">
    <interactant intactId="EBI-744545">
        <id>Q8NEC5</id>
    </interactant>
    <interactant intactId="EBI-9088686">
        <id>Q14847-2</id>
        <label>LASP1</label>
    </interactant>
    <organismsDiffer>false</organismsDiffer>
    <experiments>3</experiments>
</comment>
<comment type="interaction">
    <interactant intactId="EBI-744545">
        <id>Q8NEC5</id>
    </interactant>
    <interactant intactId="EBI-11741311">
        <id>Q5T752</id>
        <label>LCE1D</label>
    </interactant>
    <organismsDiffer>false</organismsDiffer>
    <experiments>3</experiments>
</comment>
<comment type="interaction">
    <interactant intactId="EBI-744545">
        <id>Q8NEC5</id>
    </interactant>
    <interactant intactId="EBI-11955335">
        <id>Q5T753</id>
        <label>LCE1E</label>
    </interactant>
    <organismsDiffer>false</organismsDiffer>
    <experiments>3</experiments>
</comment>
<comment type="interaction">
    <interactant intactId="EBI-744545">
        <id>Q8NEC5</id>
    </interactant>
    <interactant intactId="EBI-11958008">
        <id>Q5T754</id>
        <label>LCE1F</label>
    </interactant>
    <organismsDiffer>false</organismsDiffer>
    <experiments>3</experiments>
</comment>
<comment type="interaction">
    <interactant intactId="EBI-744545">
        <id>Q8NEC5</id>
    </interactant>
    <interactant intactId="EBI-11973993">
        <id>Q5TA81</id>
        <label>LCE2C</label>
    </interactant>
    <organismsDiffer>false</organismsDiffer>
    <experiments>3</experiments>
</comment>
<comment type="interaction">
    <interactant intactId="EBI-744545">
        <id>Q8NEC5</id>
    </interactant>
    <interactant intactId="EBI-12864460">
        <id>P48059-3</id>
        <label>LIMS1</label>
    </interactant>
    <organismsDiffer>false</organismsDiffer>
    <experiments>3</experiments>
</comment>
<comment type="interaction">
    <interactant intactId="EBI-744545">
        <id>Q8NEC5</id>
    </interactant>
    <interactant intactId="EBI-741037">
        <id>Q9BRK4</id>
        <label>LZTS2</label>
    </interactant>
    <organismsDiffer>false</organismsDiffer>
    <experiments>3</experiments>
</comment>
<comment type="interaction">
    <interactant intactId="EBI-744545">
        <id>Q8NEC5</id>
    </interactant>
    <interactant intactId="EBI-724076">
        <id>Q99750</id>
        <label>MDFI</label>
    </interactant>
    <organismsDiffer>false</organismsDiffer>
    <experiments>4</experiments>
</comment>
<comment type="interaction">
    <interactant intactId="EBI-744545">
        <id>Q8NEC5</id>
    </interactant>
    <interactant intactId="EBI-742948">
        <id>Q5JR59</id>
        <label>MTUS2</label>
    </interactant>
    <organismsDiffer>false</organismsDiffer>
    <experiments>3</experiments>
</comment>
<comment type="interaction">
    <interactant intactId="EBI-744545">
        <id>Q8NEC5</id>
    </interactant>
    <interactant intactId="EBI-18936665">
        <id>P12524-2</id>
        <label>MYCL</label>
    </interactant>
    <organismsDiffer>false</organismsDiffer>
    <experiments>3</experiments>
</comment>
<comment type="interaction">
    <interactant intactId="EBI-744545">
        <id>Q8NEC5</id>
    </interactant>
    <interactant intactId="EBI-945833">
        <id>Q7Z3S9</id>
        <label>NOTCH2NLA</label>
    </interactant>
    <organismsDiffer>false</organismsDiffer>
    <experiments>4</experiments>
</comment>
<comment type="interaction">
    <interactant intactId="EBI-744545">
        <id>Q8NEC5</id>
    </interactant>
    <interactant intactId="EBI-22310682">
        <id>P0DPK4</id>
        <label>NOTCH2NLC</label>
    </interactant>
    <organismsDiffer>false</organismsDiffer>
    <experiments>3</experiments>
</comment>
<comment type="interaction">
    <interactant intactId="EBI-744545">
        <id>Q8NEC5</id>
    </interactant>
    <interactant intactId="EBI-741896">
        <id>Q9P286</id>
        <label>PAK5</label>
    </interactant>
    <organismsDiffer>false</organismsDiffer>
    <experiments>3</experiments>
</comment>
<comment type="interaction">
    <interactant intactId="EBI-744545">
        <id>Q8NEC5</id>
    </interactant>
    <interactant intactId="EBI-350517">
        <id>Q9NR12</id>
        <label>PDLIM7</label>
    </interactant>
    <organismsDiffer>false</organismsDiffer>
    <experiments>5</experiments>
</comment>
<comment type="interaction">
    <interactant intactId="EBI-744545">
        <id>Q8NEC5</id>
    </interactant>
    <interactant intactId="EBI-726466">
        <id>O15496</id>
        <label>PLA2G10</label>
    </interactant>
    <organismsDiffer>false</organismsDiffer>
    <experiments>3</experiments>
</comment>
<comment type="interaction">
    <interactant intactId="EBI-744545">
        <id>Q8NEC5</id>
    </interactant>
    <interactant intactId="EBI-2876622">
        <id>Q9UPG8</id>
        <label>PLAGL2</label>
    </interactant>
    <organismsDiffer>false</organismsDiffer>
    <experiments>3</experiments>
</comment>
<comment type="interaction">
    <interactant intactId="EBI-744545">
        <id>Q8NEC5</id>
    </interactant>
    <interactant intactId="EBI-740019">
        <id>O15162</id>
        <label>PLSCR1</label>
    </interactant>
    <organismsDiffer>false</organismsDiffer>
    <experiments>3</experiments>
</comment>
<comment type="interaction">
    <interactant intactId="EBI-744545">
        <id>Q8NEC5</id>
    </interactant>
    <interactant intactId="EBI-750734">
        <id>Q9NRY6</id>
        <label>PLSCR3</label>
    </interactant>
    <organismsDiffer>false</organismsDiffer>
    <experiments>8</experiments>
</comment>
<comment type="interaction">
    <interactant intactId="EBI-744545">
        <id>Q8NEC5</id>
    </interactant>
    <interactant intactId="EBI-12906008">
        <id>Q6P1K2-3</id>
        <label>PMF1</label>
    </interactant>
    <organismsDiffer>false</organismsDiffer>
    <experiments>3</experiments>
</comment>
<comment type="interaction">
    <interactant intactId="EBI-744545">
        <id>Q8NEC5</id>
    </interactant>
    <interactant intactId="EBI-2860264">
        <id>Q16825</id>
        <label>PTPN21</label>
    </interactant>
    <organismsDiffer>false</organismsDiffer>
    <experiments>3</experiments>
</comment>
<comment type="interaction">
    <interactant intactId="EBI-744545">
        <id>Q8NEC5</id>
    </interactant>
    <interactant intactId="EBI-746118">
        <id>Q8HWS3</id>
        <label>RFX6</label>
    </interactant>
    <organismsDiffer>false</organismsDiffer>
    <experiments>6</experiments>
</comment>
<comment type="interaction">
    <interactant intactId="EBI-744545">
        <id>Q8NEC5</id>
    </interactant>
    <interactant intactId="EBI-874907">
        <id>P49795</id>
        <label>RGS19</label>
    </interactant>
    <organismsDiffer>false</organismsDiffer>
    <experiments>3</experiments>
</comment>
<comment type="interaction">
    <interactant intactId="EBI-744545">
        <id>Q8NEC5</id>
    </interactant>
    <interactant intactId="EBI-1052678">
        <id>O76081</id>
        <label>RGS20</label>
    </interactant>
    <organismsDiffer>false</organismsDiffer>
    <experiments>4</experiments>
</comment>
<comment type="interaction">
    <interactant intactId="EBI-744545">
        <id>Q8NEC5</id>
    </interactant>
    <interactant intactId="EBI-10178530">
        <id>O76081-6</id>
        <label>RGS20</label>
    </interactant>
    <organismsDiffer>false</organismsDiffer>
    <experiments>3</experiments>
</comment>
<comment type="interaction">
    <interactant intactId="EBI-744545">
        <id>Q8NEC5</id>
    </interactant>
    <interactant intactId="EBI-10182375">
        <id>Q9UFD9</id>
        <label>RIMBP3</label>
    </interactant>
    <organismsDiffer>false</organismsDiffer>
    <experiments>3</experiments>
</comment>
<comment type="interaction">
    <interactant intactId="EBI-744545">
        <id>Q8NEC5</id>
    </interactant>
    <interactant intactId="EBI-12009390">
        <id>Q6UXX9-2</id>
        <label>RSPO2</label>
    </interactant>
    <organismsDiffer>false</organismsDiffer>
    <experiments>3</experiments>
</comment>
<comment type="interaction">
    <interactant intactId="EBI-744545">
        <id>Q8NEC5</id>
    </interactant>
    <interactant intactId="EBI-12000762">
        <id>Q7Z5V6-2</id>
        <label>SAXO4</label>
    </interactant>
    <organismsDiffer>false</organismsDiffer>
    <experiments>3</experiments>
</comment>
<comment type="interaction">
    <interactant intactId="EBI-744545">
        <id>Q8NEC5</id>
    </interactant>
    <interactant intactId="EBI-10189029">
        <id>O75711</id>
        <label>SCRG1</label>
    </interactant>
    <organismsDiffer>false</organismsDiffer>
    <experiments>3</experiments>
</comment>
<comment type="interaction">
    <interactant intactId="EBI-744545">
        <id>Q8NEC5</id>
    </interactant>
    <interactant intactId="EBI-12372219">
        <id>O15304-2</id>
        <label>SIVA1</label>
    </interactant>
    <organismsDiffer>false</organismsDiffer>
    <experiments>3</experiments>
</comment>
<comment type="interaction">
    <interactant intactId="EBI-744545">
        <id>Q8NEC5</id>
    </interactant>
    <interactant intactId="EBI-741237">
        <id>O60504</id>
        <label>SORBS3</label>
    </interactant>
    <organismsDiffer>false</organismsDiffer>
    <experiments>3</experiments>
</comment>
<comment type="interaction">
    <interactant intactId="EBI-744545">
        <id>Q8NEC5</id>
    </interactant>
    <interactant intactId="EBI-10269322">
        <id>Q8NCR6</id>
        <label>SPMIP6</label>
    </interactant>
    <organismsDiffer>false</organismsDiffer>
    <experiments>3</experiments>
</comment>
<comment type="interaction">
    <interactant intactId="EBI-744545">
        <id>Q8NEC5</id>
    </interactant>
    <interactant intactId="EBI-742487">
        <id>O43597</id>
        <label>SPRY2</label>
    </interactant>
    <organismsDiffer>false</organismsDiffer>
    <experiments>3</experiments>
</comment>
<comment type="interaction">
    <interactant intactId="EBI-744545">
        <id>Q8NEC5</id>
    </interactant>
    <interactant intactId="EBI-12290641">
        <id>O43610</id>
        <label>SPRY3</label>
    </interactant>
    <organismsDiffer>false</organismsDiffer>
    <experiments>3</experiments>
</comment>
<comment type="interaction">
    <interactant intactId="EBI-744545">
        <id>Q8NEC5</id>
    </interactant>
    <interactant intactId="EBI-779636">
        <id>P01137</id>
        <label>TGFB1</label>
    </interactant>
    <organismsDiffer>false</organismsDiffer>
    <experiments>3</experiments>
</comment>
<comment type="interaction">
    <interactant intactId="EBI-744545">
        <id>Q8NEC5</id>
    </interactant>
    <interactant intactId="EBI-949753">
        <id>Q63HR2</id>
        <label>TNS2</label>
    </interactant>
    <organismsDiffer>false</organismsDiffer>
    <experiments>3</experiments>
</comment>
<comment type="interaction">
    <interactant intactId="EBI-744545">
        <id>Q8NEC5</id>
    </interactant>
    <interactant intactId="EBI-355744">
        <id>Q12933</id>
        <label>TRAF2</label>
    </interactant>
    <organismsDiffer>false</organismsDiffer>
    <experiments>3</experiments>
</comment>
<comment type="interaction">
    <interactant intactId="EBI-744545">
        <id>Q8NEC5</id>
    </interactant>
    <interactant intactId="EBI-719493">
        <id>P14373</id>
        <label>TRIM27</label>
    </interactant>
    <organismsDiffer>false</organismsDiffer>
    <experiments>3</experiments>
</comment>
<comment type="interaction">
    <interactant intactId="EBI-744545">
        <id>Q8NEC5</id>
    </interactant>
    <interactant intactId="EBI-5235829">
        <id>Q8IWZ5</id>
        <label>TRIM42</label>
    </interactant>
    <organismsDiffer>false</organismsDiffer>
    <experiments>3</experiments>
</comment>
<comment type="interaction">
    <interactant intactId="EBI-744545">
        <id>Q8NEC5</id>
    </interactant>
    <interactant intactId="EBI-2340370">
        <id>Q9BZR9</id>
        <label>TRIM8</label>
    </interactant>
    <organismsDiffer>false</organismsDiffer>
    <experiments>3</experiments>
</comment>
<comment type="interaction">
    <interactant intactId="EBI-744545">
        <id>Q8NEC5</id>
    </interactant>
    <interactant intactId="EBI-742327">
        <id>Q15654</id>
        <label>TRIP6</label>
    </interactant>
    <organismsDiffer>false</organismsDiffer>
    <experiments>7</experiments>
</comment>
<comment type="interaction">
    <interactant intactId="EBI-744545">
        <id>Q8NEC5</id>
    </interactant>
    <interactant intactId="EBI-8652667">
        <id>O14817</id>
        <label>TSPAN4</label>
    </interactant>
    <organismsDiffer>false</organismsDiffer>
    <experiments>3</experiments>
</comment>
<comment type="interaction">
    <interactant intactId="EBI-744545">
        <id>Q8NEC5</id>
    </interactant>
    <interactant intactId="EBI-11957238">
        <id>Q2TAL6</id>
        <label>VWC2</label>
    </interactant>
    <organismsDiffer>false</organismsDiffer>
    <experiments>3</experiments>
</comment>
<comment type="interaction">
    <interactant intactId="EBI-744545">
        <id>Q8NEC5</id>
    </interactant>
    <interactant intactId="EBI-12287587">
        <id>B2RXF5</id>
        <label>ZBTB42</label>
    </interactant>
    <organismsDiffer>false</organismsDiffer>
    <experiments>3</experiments>
</comment>
<comment type="interaction">
    <interactant intactId="EBI-744545">
        <id>Q8NEC5</id>
    </interactant>
    <interactant intactId="EBI-11962760">
        <id>Q9NZV7</id>
        <label>ZIM2</label>
    </interactant>
    <organismsDiffer>false</organismsDiffer>
    <experiments>5</experiments>
</comment>
<comment type="interaction">
    <interactant intactId="EBI-744545">
        <id>Q8NEC5</id>
    </interactant>
    <interactant intactId="EBI-4395732">
        <id>P0C7X2</id>
        <label>ZNF688</label>
    </interactant>
    <organismsDiffer>false</organismsDiffer>
    <experiments>3</experiments>
</comment>
<comment type="interaction">
    <interactant intactId="EBI-744545">
        <id>Q8NEC5</id>
    </interactant>
    <interactant intactId="EBI-10251462">
        <id>Q6NX45</id>
        <label>ZNF774</label>
    </interactant>
    <organismsDiffer>false</organismsDiffer>
    <experiments>3</experiments>
</comment>
<comment type="interaction">
    <interactant intactId="EBI-744545">
        <id>Q8NEC5</id>
    </interactant>
    <interactant intactId="EBI-11962574">
        <id>Q96EG3</id>
        <label>ZNF837</label>
    </interactant>
    <organismsDiffer>false</organismsDiffer>
    <experiments>3</experiments>
</comment>
<comment type="interaction">
    <interactant intactId="EBI-744545">
        <id>Q8NEC5</id>
    </interactant>
    <interactant intactId="EBI-9088990">
        <id>Q7Z783</id>
    </interactant>
    <organismsDiffer>false</organismsDiffer>
    <experiments>3</experiments>
</comment>
<comment type="subcellular location">
    <subcellularLocation>
        <location evidence="6">Cell projection</location>
        <location evidence="6">Cilium</location>
        <location evidence="6">Flagellum membrane</location>
        <topology evidence="1">Multi-pass membrane protein</topology>
    </subcellularLocation>
    <text evidence="6">Specifically located in the principal piece of the sperm tail.</text>
</comment>
<comment type="tissue specificity">
    <text evidence="3 6 8">Testis-specific.</text>
</comment>
<comment type="developmental stage">
    <text evidence="6">Expressed meiotically and post-meiotically.</text>
</comment>
<comment type="induction">
    <text evidence="4">Down-regulated in patients lacking sperm motility.</text>
</comment>
<comment type="disease" evidence="9">
    <disease id="DI-02565">
        <name>Spermatogenic failure 7</name>
        <acronym>SPGF7</acronym>
        <description>An infertility disorder characterized by non-motile sperm or sperm motility below the normal threshold, low sperm count, increased abnormally structured spermatozoa, and reduced semen volume.</description>
        <dbReference type="MIM" id="612997"/>
    </disease>
    <text>The disease is caused by variants affecting the gene represented in this entry.</text>
</comment>
<comment type="similarity">
    <text evidence="13">Belongs to the cation channel sperm-associated (TC 1.A.1.19) family.</text>
</comment>
<comment type="caution">
    <text evidence="13">In mouse, Slco6c1 is an additional auxiliary subunit of the CatSper complex. It is unclear if the related SLCO6A1 protein performs the same role in non-rodent species.</text>
</comment>
<name>CTSR1_HUMAN</name>
<reference key="1">
    <citation type="journal article" date="2001" name="Nature">
        <title>A sperm ion channel required for sperm motility and male fertility.</title>
        <authorList>
            <person name="Ren D."/>
            <person name="Navarro B."/>
            <person name="Perez G."/>
            <person name="Jackson A.C."/>
            <person name="Hsu S."/>
            <person name="Shi Q."/>
            <person name="Tilly J.L."/>
            <person name="Clapham D.E."/>
        </authorList>
    </citation>
    <scope>NUCLEOTIDE SEQUENCE [MRNA]</scope>
    <scope>TISSUE SPECIFICITY</scope>
    <scope>VARIANT ILE-652</scope>
</reference>
<reference key="2">
    <citation type="journal article" date="2006" name="Nature">
        <title>Human chromosome 11 DNA sequence and analysis including novel gene identification.</title>
        <authorList>
            <person name="Taylor T.D."/>
            <person name="Noguchi H."/>
            <person name="Totoki Y."/>
            <person name="Toyoda A."/>
            <person name="Kuroki Y."/>
            <person name="Dewar K."/>
            <person name="Lloyd C."/>
            <person name="Itoh T."/>
            <person name="Takeda T."/>
            <person name="Kim D.-W."/>
            <person name="She X."/>
            <person name="Barlow K.F."/>
            <person name="Bloom T."/>
            <person name="Bruford E."/>
            <person name="Chang J.L."/>
            <person name="Cuomo C.A."/>
            <person name="Eichler E."/>
            <person name="FitzGerald M.G."/>
            <person name="Jaffe D.B."/>
            <person name="LaButti K."/>
            <person name="Nicol R."/>
            <person name="Park H.-S."/>
            <person name="Seaman C."/>
            <person name="Sougnez C."/>
            <person name="Yang X."/>
            <person name="Zimmer A.R."/>
            <person name="Zody M.C."/>
            <person name="Birren B.W."/>
            <person name="Nusbaum C."/>
            <person name="Fujiyama A."/>
            <person name="Hattori M."/>
            <person name="Rogers J."/>
            <person name="Lander E.S."/>
            <person name="Sakaki Y."/>
        </authorList>
    </citation>
    <scope>NUCLEOTIDE SEQUENCE [LARGE SCALE GENOMIC DNA]</scope>
</reference>
<reference key="3">
    <citation type="journal article" date="2004" name="Genome Res.">
        <title>The status, quality, and expansion of the NIH full-length cDNA project: the Mammalian Gene Collection (MGC).</title>
        <authorList>
            <consortium name="The MGC Project Team"/>
        </authorList>
    </citation>
    <scope>NUCLEOTIDE SEQUENCE [LARGE SCALE MRNA]</scope>
    <scope>VARIANT ILE-652</scope>
    <source>
        <tissue>Testis</tissue>
    </source>
</reference>
<reference key="4">
    <citation type="journal article" date="2004" name="Hum. Reprod.">
        <title>CatSper gene expression in postnatal development of mouse testis and in subfertile men with deficient sperm motility.</title>
        <authorList>
            <person name="Nikpoor P."/>
            <person name="Mowla S.J."/>
            <person name="Movahedin M."/>
            <person name="Ziaee S.A.-M."/>
            <person name="Tiraihi T."/>
        </authorList>
    </citation>
    <scope>INDUCTION</scope>
</reference>
<reference key="5">
    <citation type="journal article" date="2006" name="Asian J. Androl.">
        <title>The expression and significance of CATSPER1 in human testis and ejaculated spermatozoa.</title>
        <authorList>
            <person name="Li H.-G."/>
            <person name="Liao A.-H."/>
            <person name="Ding X.-F."/>
            <person name="Zhou H."/>
            <person name="Xiong C.-L."/>
        </authorList>
    </citation>
    <scope>SUBCELLULAR LOCATION</scope>
    <scope>TISSUE SPECIFICITY</scope>
    <scope>DEVELOPMENTAL STAGE</scope>
</reference>
<reference key="6">
    <citation type="journal article" date="2006" name="J. Biol. Chem.">
        <title>Association of Catsper1 or -2 with Ca(v)3.3 leads to suppression of T-type calcium channel activity.</title>
        <authorList>
            <person name="Zhang D."/>
            <person name="Chen J."/>
            <person name="Saraf A."/>
            <person name="Cassar S."/>
            <person name="Han P."/>
            <person name="Rogers J.C."/>
            <person name="Brioni J.D."/>
            <person name="Sullivan J.P."/>
            <person name="Gopalakrishnan M."/>
        </authorList>
    </citation>
    <scope>INTERACTION WITH CACNA1I</scope>
</reference>
<reference key="7">
    <citation type="journal article" date="2007" name="Mol. Hum. Reprod.">
        <title>Expression of CatSper family transcripts in the mouse testis during post-natal development and human ejaculated spermatozoa: relationship to sperm motility.</title>
        <authorList>
            <person name="Li H.-G."/>
            <person name="Ding X.-F."/>
            <person name="Liao A.-H."/>
            <person name="Kong X.-B."/>
            <person name="Xiong C.-L."/>
        </authorList>
    </citation>
    <scope>TISSUE SPECIFICITY</scope>
</reference>
<reference key="8">
    <citation type="journal article" date="2009" name="Am. J. Hum. Genet.">
        <title>Human male infertility caused by mutations in the CATSPER1 channel protein.</title>
        <authorList>
            <person name="Avenarius M.R."/>
            <person name="Hildebrand M.S."/>
            <person name="Zhang Y."/>
            <person name="Meyer N.C."/>
            <person name="Smith L.L.H."/>
            <person name="Kahrizi K."/>
            <person name="Najmabadi H."/>
            <person name="Smith R.J.H."/>
        </authorList>
    </citation>
    <scope>INVOLVEMENT IN SPGF7</scope>
</reference>
<reference key="9">
    <citation type="journal article" date="2011" name="Nature">
        <title>The CatSper channel mediates progesterone-induced Ca2+ influx in human sperm.</title>
        <authorList>
            <person name="Strunker T."/>
            <person name="Goodwin N."/>
            <person name="Brenker C."/>
            <person name="Kashikar N.D."/>
            <person name="Weyand I."/>
            <person name="Seifert R."/>
            <person name="Kaupp U.B."/>
        </authorList>
    </citation>
    <scope>FUNCTION</scope>
    <scope>TRANSPORTER ACTIVITY</scope>
    <scope>ACTIVITY REGULATION</scope>
</reference>
<reference key="10">
    <citation type="journal article" date="2011" name="Nature">
        <title>Progesterone activates the principal Ca2+ channel of human sperm.</title>
        <authorList>
            <person name="Lishko P.V."/>
            <person name="Botchkina I.L."/>
            <person name="Kirichok Y."/>
        </authorList>
    </citation>
    <scope>FUNCTION</scope>
    <scope>TRANSPORTER ACTIVITY</scope>
    <scope>ACTIVITY REGULATION</scope>
</reference>
<reference key="11">
    <citation type="journal article" date="2016" name="Science">
        <title>Unconventional endocannabinoid signaling governs sperm activation via sex hormone progesterone.</title>
        <authorList>
            <person name="Miller M.R."/>
            <person name="Mannowetz N."/>
            <person name="Iavarone A.T."/>
            <person name="Safavi R."/>
            <person name="Gracheva E.O."/>
            <person name="Smith J.F."/>
            <person name="Hill R.Z."/>
            <person name="Bautista D.M."/>
            <person name="Kirichok Y."/>
            <person name="Lishko P.V."/>
        </authorList>
    </citation>
    <scope>ACTIVITY REGULATION</scope>
</reference>
<gene>
    <name type="primary">CATSPER1</name>
</gene>
<organism>
    <name type="scientific">Homo sapiens</name>
    <name type="common">Human</name>
    <dbReference type="NCBI Taxonomy" id="9606"/>
    <lineage>
        <taxon>Eukaryota</taxon>
        <taxon>Metazoa</taxon>
        <taxon>Chordata</taxon>
        <taxon>Craniata</taxon>
        <taxon>Vertebrata</taxon>
        <taxon>Euteleostomi</taxon>
        <taxon>Mammalia</taxon>
        <taxon>Eutheria</taxon>
        <taxon>Euarchontoglires</taxon>
        <taxon>Primates</taxon>
        <taxon>Haplorrhini</taxon>
        <taxon>Catarrhini</taxon>
        <taxon>Hominidae</taxon>
        <taxon>Homo</taxon>
    </lineage>
</organism>
<proteinExistence type="evidence at protein level"/>